<dbReference type="EC" id="1.14.14.16" evidence="1"/>
<dbReference type="EMBL" id="DQ336566">
    <property type="protein sequence ID" value="ABC67289.1"/>
    <property type="molecule type" value="Genomic_DNA"/>
</dbReference>
<dbReference type="SMR" id="Q2LCM1"/>
<dbReference type="GO" id="GO:0005789">
    <property type="term" value="C:endoplasmic reticulum membrane"/>
    <property type="evidence" value="ECO:0007669"/>
    <property type="project" value="UniProtKB-SubCell"/>
</dbReference>
<dbReference type="GO" id="GO:0103069">
    <property type="term" value="F:17-hydroxyprogesterone 21-hydroxylase activity"/>
    <property type="evidence" value="ECO:0007669"/>
    <property type="project" value="RHEA"/>
</dbReference>
<dbReference type="GO" id="GO:0020037">
    <property type="term" value="F:heme binding"/>
    <property type="evidence" value="ECO:0007669"/>
    <property type="project" value="InterPro"/>
</dbReference>
<dbReference type="GO" id="GO:0005506">
    <property type="term" value="F:iron ion binding"/>
    <property type="evidence" value="ECO:0007669"/>
    <property type="project" value="InterPro"/>
</dbReference>
<dbReference type="GO" id="GO:0106309">
    <property type="term" value="F:progesterone 21-hydroxylase activity"/>
    <property type="evidence" value="ECO:0007669"/>
    <property type="project" value="RHEA"/>
</dbReference>
<dbReference type="GO" id="GO:0004508">
    <property type="term" value="F:steroid 17-alpha-monooxygenase activity"/>
    <property type="evidence" value="ECO:0007669"/>
    <property type="project" value="TreeGrafter"/>
</dbReference>
<dbReference type="GO" id="GO:0005496">
    <property type="term" value="F:steroid binding"/>
    <property type="evidence" value="ECO:0007669"/>
    <property type="project" value="UniProtKB-KW"/>
</dbReference>
<dbReference type="GO" id="GO:0008395">
    <property type="term" value="F:steroid hydroxylase activity"/>
    <property type="evidence" value="ECO:0000250"/>
    <property type="project" value="UniProtKB"/>
</dbReference>
<dbReference type="GO" id="GO:0042446">
    <property type="term" value="P:hormone biosynthetic process"/>
    <property type="evidence" value="ECO:0007669"/>
    <property type="project" value="TreeGrafter"/>
</dbReference>
<dbReference type="GO" id="GO:0042448">
    <property type="term" value="P:progesterone metabolic process"/>
    <property type="evidence" value="ECO:0007669"/>
    <property type="project" value="TreeGrafter"/>
</dbReference>
<dbReference type="GO" id="GO:0006694">
    <property type="term" value="P:steroid biosynthetic process"/>
    <property type="evidence" value="ECO:0007669"/>
    <property type="project" value="UniProtKB-KW"/>
</dbReference>
<dbReference type="GO" id="GO:0008202">
    <property type="term" value="P:steroid metabolic process"/>
    <property type="evidence" value="ECO:0000250"/>
    <property type="project" value="UniProtKB"/>
</dbReference>
<dbReference type="CDD" id="cd20674">
    <property type="entry name" value="CYP21"/>
    <property type="match status" value="1"/>
</dbReference>
<dbReference type="FunFam" id="1.10.630.10:FF:000049">
    <property type="entry name" value="steroid 21-hydroxylase isoform X1"/>
    <property type="match status" value="1"/>
</dbReference>
<dbReference type="Gene3D" id="1.10.630.10">
    <property type="entry name" value="Cytochrome P450"/>
    <property type="match status" value="1"/>
</dbReference>
<dbReference type="InterPro" id="IPR001128">
    <property type="entry name" value="Cyt_P450"/>
</dbReference>
<dbReference type="InterPro" id="IPR017972">
    <property type="entry name" value="Cyt_P450_CS"/>
</dbReference>
<dbReference type="InterPro" id="IPR002401">
    <property type="entry name" value="Cyt_P450_E_grp-I"/>
</dbReference>
<dbReference type="InterPro" id="IPR036396">
    <property type="entry name" value="Cyt_P450_sf"/>
</dbReference>
<dbReference type="PANTHER" id="PTHR24289">
    <property type="entry name" value="STEROID 17-ALPHA-HYDROXYLASE/17,20 LYASE"/>
    <property type="match status" value="1"/>
</dbReference>
<dbReference type="PANTHER" id="PTHR24289:SF17">
    <property type="entry name" value="STEROID 21-HYDROXYLASE ISOFORM X1"/>
    <property type="match status" value="1"/>
</dbReference>
<dbReference type="Pfam" id="PF00067">
    <property type="entry name" value="p450"/>
    <property type="match status" value="1"/>
</dbReference>
<dbReference type="PRINTS" id="PR00463">
    <property type="entry name" value="EP450I"/>
</dbReference>
<dbReference type="PRINTS" id="PR00385">
    <property type="entry name" value="P450"/>
</dbReference>
<dbReference type="SUPFAM" id="SSF48264">
    <property type="entry name" value="Cytochrome P450"/>
    <property type="match status" value="1"/>
</dbReference>
<dbReference type="PROSITE" id="PS00086">
    <property type="entry name" value="CYTOCHROME_P450"/>
    <property type="match status" value="1"/>
</dbReference>
<keyword id="KW-0256">Endoplasmic reticulum</keyword>
<keyword id="KW-0349">Heme</keyword>
<keyword id="KW-0408">Iron</keyword>
<keyword id="KW-0446">Lipid-binding</keyword>
<keyword id="KW-0472">Membrane</keyword>
<keyword id="KW-0479">Metal-binding</keyword>
<keyword id="KW-0492">Microsome</keyword>
<keyword id="KW-0503">Monooxygenase</keyword>
<keyword id="KW-0560">Oxidoreductase</keyword>
<keyword id="KW-0754">Steroid-binding</keyword>
<keyword id="KW-0755">Steroidogenesis</keyword>
<proteinExistence type="inferred from homology"/>
<name>CP21A_CANLU</name>
<feature type="chain" id="PRO_0000269709" description="Steroid 21-hydroxylase">
    <location>
        <begin position="1"/>
        <end position="492"/>
    </location>
</feature>
<feature type="binding site" evidence="2">
    <location>
        <position position="91"/>
    </location>
    <ligand>
        <name>heme b</name>
        <dbReference type="ChEBI" id="CHEBI:60344"/>
    </ligand>
</feature>
<feature type="binding site" evidence="2">
    <location>
        <position position="120"/>
    </location>
    <ligand>
        <name>heme b</name>
        <dbReference type="ChEBI" id="CHEBI:60344"/>
    </ligand>
</feature>
<feature type="binding site" evidence="1">
    <location>
        <position position="231"/>
    </location>
    <ligand>
        <name>17alpha-hydroxyprogesterone</name>
        <dbReference type="ChEBI" id="CHEBI:17252"/>
    </ligand>
</feature>
<feature type="binding site" evidence="2">
    <location>
        <position position="231"/>
    </location>
    <ligand>
        <name>progesterone</name>
        <dbReference type="ChEBI" id="CHEBI:17026"/>
    </ligand>
</feature>
<feature type="binding site" evidence="2">
    <location>
        <position position="363"/>
    </location>
    <ligand>
        <name>heme b</name>
        <dbReference type="ChEBI" id="CHEBI:60344"/>
    </ligand>
</feature>
<feature type="binding site" evidence="2">
    <location>
        <position position="424"/>
    </location>
    <ligand>
        <name>heme b</name>
        <dbReference type="ChEBI" id="CHEBI:60344"/>
    </ligand>
</feature>
<feature type="binding site" description="axial binding residue" evidence="2">
    <location>
        <position position="426"/>
    </location>
    <ligand>
        <name>heme b</name>
        <dbReference type="ChEBI" id="CHEBI:60344"/>
    </ligand>
    <ligandPart>
        <name>Fe</name>
        <dbReference type="ChEBI" id="CHEBI:18248"/>
    </ligandPart>
</feature>
<organism>
    <name type="scientific">Canis lupus</name>
    <name type="common">Gray wolf</name>
    <dbReference type="NCBI Taxonomy" id="9612"/>
    <lineage>
        <taxon>Eukaryota</taxon>
        <taxon>Metazoa</taxon>
        <taxon>Chordata</taxon>
        <taxon>Craniata</taxon>
        <taxon>Vertebrata</taxon>
        <taxon>Euteleostomi</taxon>
        <taxon>Mammalia</taxon>
        <taxon>Eutheria</taxon>
        <taxon>Laurasiatheria</taxon>
        <taxon>Carnivora</taxon>
        <taxon>Caniformia</taxon>
        <taxon>Canidae</taxon>
        <taxon>Canis</taxon>
    </lineage>
</organism>
<gene>
    <name type="primary">CYP21</name>
</gene>
<sequence length="492" mass="55366">MLLLGVLLLTVLAGARLLWGKWKLRGLHLPPLVPGCLHLLQPDLPLHLLGLTQKLGPIYRLRLGLQDVVVLNSKRTIEEAMVRKWVDFAGRPQTPSYKLVSLHHQDLSLGDYSLLWKAHKKLTRSALLLGIRSSMEPLVEQLTQEFCERMRAQAGTPVAIQKEFSLLTCAIICHLTFGDKEDTLVHTFHDCVQDLMRTWEHWSIQMLDIIPFLRFFPNPGLWRLKRALENRDHIVEKQLRQHKESMVAGQWRDMTDYMLQRVGRLRAEEGCGQLLEGHVHMSVVDLFIGGTETTATTLSWAVAFLLHHPEIQQRLQEELDRELGPGASGSRIPYRDPTRLPLLSATVAEVLRLRPVVPLALPHCTTRPSSISGYDIPEGMVVIPNLQGAHLDETVWERPQEFRPDRFLVPGASPRVLAFGCGARVCLGEPLARLELLVVLAQLLRAFTLMPAAGTLPSLRPRARCGVNLSMQPFQVQLQPRGAGVLGRGQHP</sequence>
<protein>
    <recommendedName>
        <fullName>Steroid 21-hydroxylase</fullName>
        <ecNumber evidence="1">1.14.14.16</ecNumber>
    </recommendedName>
    <alternativeName>
        <fullName>21-OHase</fullName>
    </alternativeName>
    <alternativeName>
        <fullName>Cytochrome P-450c21</fullName>
    </alternativeName>
    <alternativeName>
        <fullName>Cytochrome P450 21</fullName>
    </alternativeName>
    <alternativeName>
        <fullName>Cytochrome P450 XXI</fullName>
    </alternativeName>
    <alternativeName>
        <fullName>Cytochrome P450-C21</fullName>
    </alternativeName>
</protein>
<comment type="function">
    <text evidence="1">Specifically catalyzes the 21-hydroxylation of steroids. Required for the adrenal synthesis of mineralocorticoids and glucocorticoids.</text>
</comment>
<comment type="catalytic activity">
    <reaction evidence="1">
        <text>17alpha-hydroxyprogesterone + reduced [NADPH--hemoprotein reductase] + O2 = 11-deoxycortisol + oxidized [NADPH--hemoprotein reductase] + H2O + H(+)</text>
        <dbReference type="Rhea" id="RHEA:50308"/>
        <dbReference type="Rhea" id="RHEA-COMP:11964"/>
        <dbReference type="Rhea" id="RHEA-COMP:11965"/>
        <dbReference type="ChEBI" id="CHEBI:15377"/>
        <dbReference type="ChEBI" id="CHEBI:15378"/>
        <dbReference type="ChEBI" id="CHEBI:15379"/>
        <dbReference type="ChEBI" id="CHEBI:17252"/>
        <dbReference type="ChEBI" id="CHEBI:28324"/>
        <dbReference type="ChEBI" id="CHEBI:57618"/>
        <dbReference type="ChEBI" id="CHEBI:58210"/>
        <dbReference type="EC" id="1.14.14.16"/>
    </reaction>
</comment>
<comment type="catalytic activity">
    <reaction evidence="1">
        <text>progesterone + reduced [NADPH--hemoprotein reductase] + O2 = 21-hydroxyprogesterone + oxidized [NADPH--hemoprotein reductase] + H2O + H(+)</text>
        <dbReference type="Rhea" id="RHEA:50304"/>
        <dbReference type="Rhea" id="RHEA-COMP:11964"/>
        <dbReference type="Rhea" id="RHEA-COMP:11965"/>
        <dbReference type="ChEBI" id="CHEBI:15377"/>
        <dbReference type="ChEBI" id="CHEBI:15378"/>
        <dbReference type="ChEBI" id="CHEBI:15379"/>
        <dbReference type="ChEBI" id="CHEBI:16973"/>
        <dbReference type="ChEBI" id="CHEBI:17026"/>
        <dbReference type="ChEBI" id="CHEBI:57618"/>
        <dbReference type="ChEBI" id="CHEBI:58210"/>
        <dbReference type="EC" id="1.14.14.16"/>
    </reaction>
</comment>
<comment type="cofactor">
    <cofactor evidence="1">
        <name>heme b</name>
        <dbReference type="ChEBI" id="CHEBI:60344"/>
    </cofactor>
</comment>
<comment type="subcellular location">
    <subcellularLocation>
        <location>Endoplasmic reticulum membrane</location>
        <topology>Peripheral membrane protein</topology>
    </subcellularLocation>
    <subcellularLocation>
        <location>Microsome membrane</location>
        <topology>Peripheral membrane protein</topology>
    </subcellularLocation>
</comment>
<comment type="domain">
    <text>The leucine-rich hydrophobic amino acid N-terminal region probably helps to anchor the protein to the microsomal membrane.</text>
</comment>
<comment type="similarity">
    <text evidence="3">Belongs to the cytochrome P450 family.</text>
</comment>
<accession>Q2LCM1</accession>
<evidence type="ECO:0000250" key="1">
    <source>
        <dbReference type="UniProtKB" id="P00191"/>
    </source>
</evidence>
<evidence type="ECO:0000250" key="2">
    <source>
        <dbReference type="UniProtKB" id="P08686"/>
    </source>
</evidence>
<evidence type="ECO:0000305" key="3"/>
<reference key="1">
    <citation type="submission" date="2005-12" db="EMBL/GenBank/DDBJ databases">
        <title>Phylogenetic analysis of a steroid 21-hydroxylase gene in some species of animals and a man.</title>
        <authorList>
            <person name="Kosowska B."/>
            <person name="Brzezinska K."/>
            <person name="Dobosz T."/>
            <person name="Moska M."/>
            <person name="Strzala T."/>
            <person name="Marszalek B."/>
            <person name="Schmidt K."/>
        </authorList>
    </citation>
    <scope>NUCLEOTIDE SEQUENCE [GENOMIC DNA]</scope>
    <source>
        <tissue>Muscle</tissue>
    </source>
</reference>